<organism>
    <name type="scientific">Bos taurus</name>
    <name type="common">Bovine</name>
    <dbReference type="NCBI Taxonomy" id="9913"/>
    <lineage>
        <taxon>Eukaryota</taxon>
        <taxon>Metazoa</taxon>
        <taxon>Chordata</taxon>
        <taxon>Craniata</taxon>
        <taxon>Vertebrata</taxon>
        <taxon>Euteleostomi</taxon>
        <taxon>Mammalia</taxon>
        <taxon>Eutheria</taxon>
        <taxon>Laurasiatheria</taxon>
        <taxon>Artiodactyla</taxon>
        <taxon>Ruminantia</taxon>
        <taxon>Pecora</taxon>
        <taxon>Bovidae</taxon>
        <taxon>Bovinae</taxon>
        <taxon>Bos</taxon>
    </lineage>
</organism>
<gene>
    <name type="primary">PTGES2</name>
    <name type="synonym">PGES2</name>
</gene>
<feature type="chain" id="PRO_0000013125" description="Prostaglandin E synthase 2">
    <location>
        <begin position="1"/>
        <end position="372"/>
    </location>
</feature>
<feature type="chain" id="PRO_0000013126" description="Prostaglandin E synthase 2 truncated form" evidence="7">
    <location>
        <begin position="86"/>
        <end position="372"/>
    </location>
</feature>
<feature type="topological domain" description="Lumenal" evidence="10">
    <location>
        <begin position="1"/>
        <end position="54"/>
    </location>
</feature>
<feature type="transmembrane region" description="Helical" evidence="4">
    <location>
        <begin position="55"/>
        <end position="71"/>
    </location>
</feature>
<feature type="topological domain" description="Cytoplasmic" evidence="10">
    <location>
        <begin position="72"/>
        <end position="372"/>
    </location>
</feature>
<feature type="domain" description="Glutaredoxin" evidence="5">
    <location>
        <begin position="87"/>
        <end position="190"/>
    </location>
</feature>
<feature type="domain" description="GST C-terminal">
    <location>
        <begin position="259"/>
        <end position="372"/>
    </location>
</feature>
<feature type="binding site" evidence="3">
    <location>
        <position position="145"/>
    </location>
    <ligand>
        <name>glutathione</name>
        <dbReference type="ChEBI" id="CHEBI:57925"/>
    </ligand>
</feature>
<feature type="binding site" evidence="3">
    <location>
        <begin position="161"/>
        <end position="162"/>
    </location>
    <ligand>
        <name>glutathione</name>
        <dbReference type="ChEBI" id="CHEBI:57925"/>
    </ligand>
</feature>
<feature type="site" description="Cleavage" evidence="7">
    <location>
        <begin position="84"/>
        <end position="85"/>
    </location>
</feature>
<feature type="modified residue" description="Phosphoserine" evidence="2">
    <location>
        <position position="92"/>
    </location>
</feature>
<name>PGES2_BOVIN</name>
<dbReference type="EC" id="5.3.99.3" evidence="6 7"/>
<dbReference type="EMBL" id="DAAA02032171">
    <property type="status" value="NOT_ANNOTATED_CDS"/>
    <property type="molecule type" value="Genomic_DNA"/>
</dbReference>
<dbReference type="EMBL" id="AY692441">
    <property type="protein sequence ID" value="AAU04848.1"/>
    <property type="molecule type" value="mRNA"/>
</dbReference>
<dbReference type="RefSeq" id="NP_001160026.1">
    <property type="nucleotide sequence ID" value="NM_001166554.1"/>
</dbReference>
<dbReference type="SMR" id="Q66LN0"/>
<dbReference type="FunCoup" id="Q66LN0">
    <property type="interactions" value="1889"/>
</dbReference>
<dbReference type="STRING" id="9913.ENSBTAP00000056972"/>
<dbReference type="PaxDb" id="9913-ENSBTAP00000021584"/>
<dbReference type="GeneID" id="493639"/>
<dbReference type="KEGG" id="bta:493639"/>
<dbReference type="CTD" id="80142"/>
<dbReference type="eggNOG" id="KOG3029">
    <property type="taxonomic scope" value="Eukaryota"/>
</dbReference>
<dbReference type="InParanoid" id="Q66LN0"/>
<dbReference type="OrthoDB" id="423541at2759"/>
<dbReference type="TreeFam" id="TF314304"/>
<dbReference type="BRENDA" id="5.3.99.3">
    <property type="organism ID" value="908"/>
</dbReference>
<dbReference type="UniPathway" id="UPA00662"/>
<dbReference type="Proteomes" id="UP000009136">
    <property type="component" value="Unplaced"/>
</dbReference>
<dbReference type="GO" id="GO:0005783">
    <property type="term" value="C:endoplasmic reticulum"/>
    <property type="evidence" value="ECO:0007669"/>
    <property type="project" value="UniProtKB-KW"/>
</dbReference>
<dbReference type="GO" id="GO:0016020">
    <property type="term" value="C:membrane"/>
    <property type="evidence" value="ECO:0007669"/>
    <property type="project" value="UniProtKB-KW"/>
</dbReference>
<dbReference type="GO" id="GO:0005739">
    <property type="term" value="C:mitochondrion"/>
    <property type="evidence" value="ECO:0000318"/>
    <property type="project" value="GO_Central"/>
</dbReference>
<dbReference type="GO" id="GO:0036134">
    <property type="term" value="F:12-hydroxyheptadecatrienoic acid synthase activity"/>
    <property type="evidence" value="ECO:0007669"/>
    <property type="project" value="RHEA"/>
</dbReference>
<dbReference type="GO" id="GO:0043295">
    <property type="term" value="F:glutathione binding"/>
    <property type="evidence" value="ECO:0000250"/>
    <property type="project" value="UniProtKB"/>
</dbReference>
<dbReference type="GO" id="GO:0020037">
    <property type="term" value="F:heme binding"/>
    <property type="evidence" value="ECO:0000250"/>
    <property type="project" value="UniProtKB"/>
</dbReference>
<dbReference type="GO" id="GO:0016829">
    <property type="term" value="F:lyase activity"/>
    <property type="evidence" value="ECO:0000250"/>
    <property type="project" value="UniProtKB"/>
</dbReference>
<dbReference type="GO" id="GO:0050220">
    <property type="term" value="F:prostaglandin-E synthase activity"/>
    <property type="evidence" value="ECO:0000314"/>
    <property type="project" value="UniProtKB"/>
</dbReference>
<dbReference type="GO" id="GO:0001516">
    <property type="term" value="P:prostaglandin biosynthetic process"/>
    <property type="evidence" value="ECO:0000314"/>
    <property type="project" value="UniProtKB"/>
</dbReference>
<dbReference type="CDD" id="cd03197">
    <property type="entry name" value="GST_C_mPGES2"/>
    <property type="match status" value="1"/>
</dbReference>
<dbReference type="CDD" id="cd03040">
    <property type="entry name" value="GST_N_mPGES2"/>
    <property type="match status" value="1"/>
</dbReference>
<dbReference type="FunFam" id="1.20.1050.10:FF:000028">
    <property type="entry name" value="Prostaglandin E synthase 2"/>
    <property type="match status" value="1"/>
</dbReference>
<dbReference type="FunFam" id="3.40.30.10:FF:000114">
    <property type="entry name" value="Prostaglandin E synthase 2"/>
    <property type="match status" value="1"/>
</dbReference>
<dbReference type="FunFam" id="6.20.200.30:FF:000001">
    <property type="entry name" value="Prostaglandin E synthase 2"/>
    <property type="match status" value="1"/>
</dbReference>
<dbReference type="Gene3D" id="1.20.1050.10">
    <property type="match status" value="1"/>
</dbReference>
<dbReference type="Gene3D" id="6.20.200.30">
    <property type="match status" value="1"/>
</dbReference>
<dbReference type="Gene3D" id="3.40.30.10">
    <property type="entry name" value="Glutaredoxin"/>
    <property type="match status" value="1"/>
</dbReference>
<dbReference type="InterPro" id="IPR010987">
    <property type="entry name" value="Glutathione-S-Trfase_C-like"/>
</dbReference>
<dbReference type="InterPro" id="IPR036282">
    <property type="entry name" value="Glutathione-S-Trfase_C_sf"/>
</dbReference>
<dbReference type="InterPro" id="IPR004045">
    <property type="entry name" value="Glutathione_S-Trfase_N"/>
</dbReference>
<dbReference type="InterPro" id="IPR034334">
    <property type="entry name" value="PGES2"/>
</dbReference>
<dbReference type="InterPro" id="IPR034335">
    <property type="entry name" value="PGES2_C"/>
</dbReference>
<dbReference type="InterPro" id="IPR036249">
    <property type="entry name" value="Thioredoxin-like_sf"/>
</dbReference>
<dbReference type="PANTHER" id="PTHR12782">
    <property type="entry name" value="MICROSOMAL PROSTAGLANDIN E SYNTHASE-2"/>
    <property type="match status" value="1"/>
</dbReference>
<dbReference type="PANTHER" id="PTHR12782:SF5">
    <property type="entry name" value="PROSTAGLANDIN E SYNTHASE 2"/>
    <property type="match status" value="1"/>
</dbReference>
<dbReference type="Pfam" id="PF13417">
    <property type="entry name" value="GST_N_3"/>
    <property type="match status" value="1"/>
</dbReference>
<dbReference type="SFLD" id="SFLDG01182">
    <property type="entry name" value="Prostaglandin_E_synthase_like"/>
    <property type="match status" value="1"/>
</dbReference>
<dbReference type="SFLD" id="SFLDG01203">
    <property type="entry name" value="Prostaglandin_E_synthase_like1"/>
    <property type="match status" value="1"/>
</dbReference>
<dbReference type="SUPFAM" id="SSF47616">
    <property type="entry name" value="GST C-terminal domain-like"/>
    <property type="match status" value="1"/>
</dbReference>
<dbReference type="SUPFAM" id="SSF52833">
    <property type="entry name" value="Thioredoxin-like"/>
    <property type="match status" value="1"/>
</dbReference>
<dbReference type="PROSITE" id="PS00195">
    <property type="entry name" value="GLUTAREDOXIN_1"/>
    <property type="match status" value="1"/>
</dbReference>
<dbReference type="PROSITE" id="PS51354">
    <property type="entry name" value="GLUTAREDOXIN_2"/>
    <property type="match status" value="1"/>
</dbReference>
<dbReference type="PROSITE" id="PS50405">
    <property type="entry name" value="GST_CTER"/>
    <property type="match status" value="1"/>
</dbReference>
<reference key="1">
    <citation type="journal article" date="2009" name="Genome Biol.">
        <title>A whole-genome assembly of the domestic cow, Bos taurus.</title>
        <authorList>
            <person name="Zimin A.V."/>
            <person name="Delcher A.L."/>
            <person name="Florea L."/>
            <person name="Kelley D.R."/>
            <person name="Schatz M.C."/>
            <person name="Puiu D."/>
            <person name="Hanrahan F."/>
            <person name="Pertea G."/>
            <person name="Van Tassell C.P."/>
            <person name="Sonstegard T.S."/>
            <person name="Marcais G."/>
            <person name="Roberts M."/>
            <person name="Subramanian P."/>
            <person name="Yorke J.A."/>
            <person name="Salzberg S.L."/>
        </authorList>
    </citation>
    <scope>NUCLEOTIDE SEQUENCE [LARGE SCALE GENOMIC DNA]</scope>
    <source>
        <strain>Hereford</strain>
    </source>
</reference>
<reference key="2">
    <citation type="journal article" date="2002" name="Biochem. Biophys. Res. Commun.">
        <title>Identification and characterization of a novel type of membrane-associated prostaglandin E synthase.</title>
        <authorList>
            <person name="Tanikawa N."/>
            <person name="Ohmiya Y."/>
            <person name="Ohkubo H."/>
            <person name="Hashimoto K."/>
            <person name="Kangawa K."/>
            <person name="Kojima M."/>
            <person name="Ito S."/>
            <person name="Watanabe K."/>
        </authorList>
    </citation>
    <scope>PROTEIN SEQUENCE OF 85-106</scope>
    <scope>CATALYTIC ACTIVITY</scope>
    <scope>FUNCTION</scope>
    <scope>BIOPHYSICOCHEMICAL PROPERTIES</scope>
</reference>
<reference key="3">
    <citation type="journal article" date="2005" name="Biol. Reprod.">
        <title>Expression and contribution of three different isoforms of prostaglandin E synthase in the bovine endometrium.</title>
        <authorList>
            <person name="Parent J."/>
            <person name="Fortier M.A."/>
        </authorList>
    </citation>
    <scope>NUCLEOTIDE SEQUENCE [MRNA] OF 135-191</scope>
    <scope>TISSUE SPECIFICITY</scope>
    <scope>DEVELOPMENTAL STAGE</scope>
</reference>
<reference key="4">
    <citation type="journal article" date="1999" name="Biochim. Biophys. Acta">
        <title>Purification and characterization of membrane-bound prostaglandin E synthase from bovine heart.</title>
        <authorList>
            <person name="Watanabe K."/>
            <person name="Kurihara K."/>
            <person name="Suzuki T."/>
        </authorList>
    </citation>
    <scope>FUNCTION</scope>
    <scope>CATALYTIC ACTIVITY</scope>
    <scope>ACTIVITY REGULATION</scope>
    <scope>BIOPHYSICOCHEMICAL PROPERTIES</scope>
    <scope>SUBCELLULAR LOCATION</scope>
    <scope>TISSUE SPECIFICITY</scope>
</reference>
<proteinExistence type="evidence at protein level"/>
<evidence type="ECO:0000250" key="1">
    <source>
        <dbReference type="UniProtKB" id="Q8BWM0"/>
    </source>
</evidence>
<evidence type="ECO:0000250" key="2">
    <source>
        <dbReference type="UniProtKB" id="Q9H7Z7"/>
    </source>
</evidence>
<evidence type="ECO:0000250" key="3">
    <source>
        <dbReference type="UniProtKB" id="Q9N0A4"/>
    </source>
</evidence>
<evidence type="ECO:0000255" key="4"/>
<evidence type="ECO:0000255" key="5">
    <source>
        <dbReference type="PROSITE-ProRule" id="PRU00686"/>
    </source>
</evidence>
<evidence type="ECO:0000269" key="6">
    <source>
    </source>
</evidence>
<evidence type="ECO:0000269" key="7">
    <source>
    </source>
</evidence>
<evidence type="ECO:0000269" key="8">
    <source>
    </source>
</evidence>
<evidence type="ECO:0000303" key="9">
    <source>
    </source>
</evidence>
<evidence type="ECO:0000305" key="10"/>
<evidence type="ECO:0000305" key="11">
    <source>
    </source>
</evidence>
<accession>Q66LN0</accession>
<accession>F1N1J6</accession>
<keyword id="KW-0963">Cytoplasm</keyword>
<keyword id="KW-0903">Direct protein sequencing</keyword>
<keyword id="KW-0256">Endoplasmic reticulum</keyword>
<keyword id="KW-0275">Fatty acid biosynthesis</keyword>
<keyword id="KW-0276">Fatty acid metabolism</keyword>
<keyword id="KW-0413">Isomerase</keyword>
<keyword id="KW-0444">Lipid biosynthesis</keyword>
<keyword id="KW-0443">Lipid metabolism</keyword>
<keyword id="KW-0472">Membrane</keyword>
<keyword id="KW-0492">Microsome</keyword>
<keyword id="KW-0597">Phosphoprotein</keyword>
<keyword id="KW-0643">Prostaglandin biosynthesis</keyword>
<keyword id="KW-0644">Prostaglandin metabolism</keyword>
<keyword id="KW-1185">Reference proteome</keyword>
<keyword id="KW-0812">Transmembrane</keyword>
<keyword id="KW-1133">Transmembrane helix</keyword>
<protein>
    <recommendedName>
        <fullName>Prostaglandin E synthase 2</fullName>
        <ecNumber evidence="6 7">5.3.99.3</ecNumber>
    </recommendedName>
    <alternativeName>
        <fullName evidence="9">Membrane-associated prostaglandin E synthase-2</fullName>
        <shortName evidence="9">mPGE synthase-2</shortName>
    </alternativeName>
    <alternativeName>
        <fullName>Microsomal prostaglandin E synthase 2</fullName>
        <shortName>mPGES-2</shortName>
    </alternativeName>
    <component>
        <recommendedName>
            <fullName>Prostaglandin E synthase 2 truncated form</fullName>
        </recommendedName>
    </component>
</protein>
<sequence length="372" mass="41738">MAHAVRALWPHGRALAWRLGDRPALGLHAQSRAGFTGAAGGSGPAATARKGGPRLLGAAALALGGALGLYHTARWHLRAQDLRAERSATQLSLSSRLQLTLYQYKTCPFCSKVRAFLDFHALPYQVVEVNPVRRAEIKFSSYRKVPIVMAQEGESLQQLNDSSVIISALKTYLVSGQPLADIITYYPPMKAVNDQGKEVTEFCNKYWLMLDEKEAQRMYGGKEARTEEMKWRQWADDWLVHLISPNVYRTPAEALASFDYIVKEGNFGTVEGAMAKYMGAAAMYFISKRLKRRHHLRDDVREDLYEAANKWVAAVGKDRPFMGGQKPNLADLAVYGVLRVMEGLEAFDDLMRHTHIQPWYLRVEKAIAEAPQ</sequence>
<comment type="function">
    <text evidence="2 3 6 7">Isomerase that catalyzes the conversion of PGH2 into the more stable prostaglandin E2 (PGE2) (in vitro) (PubMed:10446427, PubMed:11866447). The biological function and the GSH-dependent property of PTGES2 is still under debate (By similarity). In vivo, PTGES2 could form a complex with GSH and heme and would not participate in PGE2 synthesis but would catalyze the degradation of prostaglandin E2 H2 (PGH2) to 12(S)-hydroxy-5(Z),8(E),10(E)-heptadecatrienoic acid (HHT) and malondialdehyde (MDA) (By similarity).</text>
</comment>
<comment type="catalytic activity">
    <reaction evidence="6 7">
        <text>prostaglandin H2 = prostaglandin E2</text>
        <dbReference type="Rhea" id="RHEA:12893"/>
        <dbReference type="ChEBI" id="CHEBI:57405"/>
        <dbReference type="ChEBI" id="CHEBI:606564"/>
        <dbReference type="EC" id="5.3.99.3"/>
    </reaction>
    <physiologicalReaction direction="left-to-right" evidence="11">
        <dbReference type="Rhea" id="RHEA:12894"/>
    </physiologicalReaction>
</comment>
<comment type="catalytic activity">
    <reaction evidence="2">
        <text>prostaglandin H2 = (12S)-hydroxy-(5Z,8E,10E)-heptadecatrienoate + malonaldehyde</text>
        <dbReference type="Rhea" id="RHEA:48644"/>
        <dbReference type="ChEBI" id="CHEBI:57405"/>
        <dbReference type="ChEBI" id="CHEBI:90694"/>
        <dbReference type="ChEBI" id="CHEBI:566274"/>
    </reaction>
    <physiologicalReaction direction="left-to-right" evidence="2">
        <dbReference type="Rhea" id="RHEA:48645"/>
    </physiologicalReaction>
</comment>
<comment type="activity regulation">
    <text evidence="6">Isomerase activity is increased by sulfhydril compounds. Dithiothreitol (DTT) is most effective, followed by glutathione (GSH) and 2-mercaptoethanol.</text>
</comment>
<comment type="biophysicochemical properties">
    <kinetics>
        <KM evidence="7">28 uM for PGH2</KM>
        <KM evidence="6">24 uM for PGH2</KM>
    </kinetics>
</comment>
<comment type="pathway">
    <text evidence="6 7">Lipid metabolism; prostaglandin biosynthesis.</text>
</comment>
<comment type="subunit">
    <text evidence="1 2">May interact with CEBPB. Interacts with EXOSC10 (By similarity). Homodimer.</text>
</comment>
<comment type="subcellular location">
    <subcellularLocation>
        <location evidence="6">Microsome membrane</location>
        <topology evidence="4">Single-pass membrane protein</topology>
    </subcellularLocation>
</comment>
<comment type="subcellular location">
    <molecule>Prostaglandin E synthase 2 truncated form</molecule>
    <subcellularLocation>
        <location evidence="2">Cytoplasm</location>
    </subcellularLocation>
    <text evidence="2">Synthesized as a Golgi membrane-bound protein, which is further cleaved into the predominant soluble truncated form.</text>
</comment>
<comment type="tissue specificity">
    <text evidence="6 8">Detected in heart (at protein level) (PubMed:10446427). Widely expressed. Expressed in heart &gt; kidney &gt; muscle &gt; testis &gt; endometrium = ovary &gt; myometrium = spleen = lung. In endometrium, it is mainly expressed in luminal epithelial cells followed by glandular epithelial cells, but expression is also present in stromal cells at a lower level.</text>
</comment>
<comment type="developmental stage">
    <text evidence="8">During the estrus cycle, it decreases from the beginning of the cycle until days 13-15 and then increase until ovulation (at protein level).</text>
</comment>
<comment type="PTM">
    <text evidence="2">Synthesized as a Golgi membrane-associated protein, and the proteolytic removal of the N-terminal hydrophobic domain leads to the formation of a mature cytosolic enzyme.</text>
</comment>
<comment type="similarity">
    <text evidence="10">Belongs to the GST superfamily.</text>
</comment>
<comment type="caution">
    <text evidence="1 2 3 10">It is not known if heme and GST are required for prostaglandin synthase activity. The protein copurifies with heme and GST when DTT is omitted during the purification procedure. The GSH-heme complex-bound enzyme has been proposed to act as a lyase and catalyze the degradation of prostaglandin E2 H2 (PGH2) to 12(S)-hydroxy-5(Z),8(E),10(E)-heptadecatrienoic acid (HHT) and malondialdehyde (MDA). Boiling the enzyme leads to loss of prostaglandin synthase activity, but does not eliminate the lyase activity. Besides, free heme can catalyze the formation of 12L-hydroxy-5,8,10-heptadecatrienoic acid (HHT) (By similarity). A more recent study demonstrates the GSH-dependent property of PTGES2, DTT dissociates the bound heme to produce active PGE2 synthase in vitro (By similarity). PTGES2 can only catalyzes PGE2 synthesis in the free state as an enzyme, while in vivo it forms a complex with heme and does not participate in PGE2 synthesis (By similarity). In agreement with this study, the in vivo evidence from PTGES2 deficient mice do not show that this protein is responsible for the PGE2 production under basal or pathophysiological conditions (By similarity).</text>
</comment>